<name>RIMP_ALKOO</name>
<evidence type="ECO:0000255" key="1">
    <source>
        <dbReference type="HAMAP-Rule" id="MF_01077"/>
    </source>
</evidence>
<proteinExistence type="inferred from homology"/>
<sequence>MAKNRVEKITERLVMPIIQNENFELVDLEYKKEGSNWYLRIYIDKPGGITLDDCQKVSEQLGEELDREDPISENYFLEVSSPGLDRPLKKDSDFIRFAGEIVEVKLYEALNGNKVIEGELVGLEENMIKINVANVGLLELPKEKVALTRLAVKF</sequence>
<dbReference type="EMBL" id="CP000853">
    <property type="protein sequence ID" value="ABW19067.1"/>
    <property type="molecule type" value="Genomic_DNA"/>
</dbReference>
<dbReference type="RefSeq" id="WP_012159379.1">
    <property type="nucleotide sequence ID" value="NC_009922.1"/>
</dbReference>
<dbReference type="SMR" id="A8MHI0"/>
<dbReference type="STRING" id="350688.Clos_1524"/>
<dbReference type="KEGG" id="aoe:Clos_1524"/>
<dbReference type="eggNOG" id="COG0779">
    <property type="taxonomic scope" value="Bacteria"/>
</dbReference>
<dbReference type="HOGENOM" id="CLU_070525_2_0_9"/>
<dbReference type="OrthoDB" id="9805006at2"/>
<dbReference type="Proteomes" id="UP000000269">
    <property type="component" value="Chromosome"/>
</dbReference>
<dbReference type="GO" id="GO:0005829">
    <property type="term" value="C:cytosol"/>
    <property type="evidence" value="ECO:0007669"/>
    <property type="project" value="TreeGrafter"/>
</dbReference>
<dbReference type="GO" id="GO:0000028">
    <property type="term" value="P:ribosomal small subunit assembly"/>
    <property type="evidence" value="ECO:0007669"/>
    <property type="project" value="TreeGrafter"/>
</dbReference>
<dbReference type="GO" id="GO:0006412">
    <property type="term" value="P:translation"/>
    <property type="evidence" value="ECO:0007669"/>
    <property type="project" value="TreeGrafter"/>
</dbReference>
<dbReference type="CDD" id="cd01734">
    <property type="entry name" value="YlxS_C"/>
    <property type="match status" value="1"/>
</dbReference>
<dbReference type="FunFam" id="3.30.300.70:FF:000001">
    <property type="entry name" value="Ribosome maturation factor RimP"/>
    <property type="match status" value="1"/>
</dbReference>
<dbReference type="Gene3D" id="2.30.30.180">
    <property type="entry name" value="Ribosome maturation factor RimP, C-terminal domain"/>
    <property type="match status" value="1"/>
</dbReference>
<dbReference type="Gene3D" id="3.30.300.70">
    <property type="entry name" value="RimP-like superfamily, N-terminal"/>
    <property type="match status" value="1"/>
</dbReference>
<dbReference type="HAMAP" id="MF_01077">
    <property type="entry name" value="RimP"/>
    <property type="match status" value="1"/>
</dbReference>
<dbReference type="InterPro" id="IPR003728">
    <property type="entry name" value="Ribosome_maturation_RimP"/>
</dbReference>
<dbReference type="InterPro" id="IPR028998">
    <property type="entry name" value="RimP_C"/>
</dbReference>
<dbReference type="InterPro" id="IPR036847">
    <property type="entry name" value="RimP_C_sf"/>
</dbReference>
<dbReference type="InterPro" id="IPR028989">
    <property type="entry name" value="RimP_N"/>
</dbReference>
<dbReference type="InterPro" id="IPR035956">
    <property type="entry name" value="RimP_N_sf"/>
</dbReference>
<dbReference type="NCBIfam" id="NF000928">
    <property type="entry name" value="PRK00092.1-2"/>
    <property type="match status" value="1"/>
</dbReference>
<dbReference type="PANTHER" id="PTHR33867">
    <property type="entry name" value="RIBOSOME MATURATION FACTOR RIMP"/>
    <property type="match status" value="1"/>
</dbReference>
<dbReference type="PANTHER" id="PTHR33867:SF1">
    <property type="entry name" value="RIBOSOME MATURATION FACTOR RIMP"/>
    <property type="match status" value="1"/>
</dbReference>
<dbReference type="Pfam" id="PF17384">
    <property type="entry name" value="DUF150_C"/>
    <property type="match status" value="1"/>
</dbReference>
<dbReference type="Pfam" id="PF02576">
    <property type="entry name" value="RimP_N"/>
    <property type="match status" value="1"/>
</dbReference>
<dbReference type="SUPFAM" id="SSF74942">
    <property type="entry name" value="YhbC-like, C-terminal domain"/>
    <property type="match status" value="1"/>
</dbReference>
<dbReference type="SUPFAM" id="SSF75420">
    <property type="entry name" value="YhbC-like, N-terminal domain"/>
    <property type="match status" value="1"/>
</dbReference>
<comment type="function">
    <text evidence="1">Required for maturation of 30S ribosomal subunits.</text>
</comment>
<comment type="subcellular location">
    <subcellularLocation>
        <location evidence="1">Cytoplasm</location>
    </subcellularLocation>
</comment>
<comment type="similarity">
    <text evidence="1">Belongs to the RimP family.</text>
</comment>
<gene>
    <name evidence="1" type="primary">rimP</name>
    <name type="ordered locus">Clos_1524</name>
</gene>
<accession>A8MHI0</accession>
<reference key="1">
    <citation type="submission" date="2007-10" db="EMBL/GenBank/DDBJ databases">
        <title>Complete genome of Alkaliphilus oremlandii OhILAs.</title>
        <authorList>
            <person name="Copeland A."/>
            <person name="Lucas S."/>
            <person name="Lapidus A."/>
            <person name="Barry K."/>
            <person name="Detter J.C."/>
            <person name="Glavina del Rio T."/>
            <person name="Hammon N."/>
            <person name="Israni S."/>
            <person name="Dalin E."/>
            <person name="Tice H."/>
            <person name="Pitluck S."/>
            <person name="Chain P."/>
            <person name="Malfatti S."/>
            <person name="Shin M."/>
            <person name="Vergez L."/>
            <person name="Schmutz J."/>
            <person name="Larimer F."/>
            <person name="Land M."/>
            <person name="Hauser L."/>
            <person name="Kyrpides N."/>
            <person name="Mikhailova N."/>
            <person name="Stolz J.F."/>
            <person name="Dawson A."/>
            <person name="Fisher E."/>
            <person name="Crable B."/>
            <person name="Perera E."/>
            <person name="Lisak J."/>
            <person name="Ranganathan M."/>
            <person name="Basu P."/>
            <person name="Richardson P."/>
        </authorList>
    </citation>
    <scope>NUCLEOTIDE SEQUENCE [LARGE SCALE GENOMIC DNA]</scope>
    <source>
        <strain>OhILAs</strain>
    </source>
</reference>
<feature type="chain" id="PRO_0000384597" description="Ribosome maturation factor RimP">
    <location>
        <begin position="1"/>
        <end position="154"/>
    </location>
</feature>
<organism>
    <name type="scientific">Alkaliphilus oremlandii (strain OhILAs)</name>
    <name type="common">Clostridium oremlandii (strain OhILAs)</name>
    <dbReference type="NCBI Taxonomy" id="350688"/>
    <lineage>
        <taxon>Bacteria</taxon>
        <taxon>Bacillati</taxon>
        <taxon>Bacillota</taxon>
        <taxon>Clostridia</taxon>
        <taxon>Peptostreptococcales</taxon>
        <taxon>Natronincolaceae</taxon>
        <taxon>Alkaliphilus</taxon>
    </lineage>
</organism>
<protein>
    <recommendedName>
        <fullName evidence="1">Ribosome maturation factor RimP</fullName>
    </recommendedName>
</protein>
<keyword id="KW-0963">Cytoplasm</keyword>
<keyword id="KW-1185">Reference proteome</keyword>
<keyword id="KW-0690">Ribosome biogenesis</keyword>